<protein>
    <recommendedName>
        <fullName evidence="1">1-deoxy-D-xylulose 5-phosphate reductoisomerase</fullName>
        <shortName evidence="1">DXP reductoisomerase</shortName>
        <ecNumber evidence="1">1.1.1.267</ecNumber>
    </recommendedName>
    <alternativeName>
        <fullName evidence="1">1-deoxyxylulose-5-phosphate reductoisomerase</fullName>
    </alternativeName>
    <alternativeName>
        <fullName evidence="1">2-C-methyl-D-erythritol 4-phosphate synthase</fullName>
    </alternativeName>
</protein>
<sequence length="396" mass="40742">MAGSSLRQVAVFGATGSIGASALDVIARHPERLRASVLSAGSKVEDLLALCAAHQPAHALIADAALYPALRDGLRALGLATQAHAGAEALDALAGSDACDTVVAAIVGAAGLPSTLAAARAGKRLLLANKESLVLAGELLTRTATAAGAEIIPIDSEHSAIFQCLRSCDAGRGVRRVILTASGGPFRGRDRAGLAAVTPAQAVAHPKWSMGPKISVDSATLMNKGLEVIEAHHLFGLPGEQIDVLVHPQSLVHSLVEFVDGSTLAQLGLPDMRTTLAVGLAWPERVESGVGGLDLLSQGRLDFEAPDTAAFPCLRLAWDALRAGGTAPAILNAANEVAVSAFLQGQVGFLAIPALVEHALTTLPRHNADTLDTLLFADAQARQITERALAHHALHA</sequence>
<name>DXR_XANOM</name>
<comment type="function">
    <text evidence="1">Catalyzes the NADPH-dependent rearrangement and reduction of 1-deoxy-D-xylulose-5-phosphate (DXP) to 2-C-methyl-D-erythritol 4-phosphate (MEP).</text>
</comment>
<comment type="catalytic activity">
    <reaction evidence="1">
        <text>2-C-methyl-D-erythritol 4-phosphate + NADP(+) = 1-deoxy-D-xylulose 5-phosphate + NADPH + H(+)</text>
        <dbReference type="Rhea" id="RHEA:13717"/>
        <dbReference type="ChEBI" id="CHEBI:15378"/>
        <dbReference type="ChEBI" id="CHEBI:57783"/>
        <dbReference type="ChEBI" id="CHEBI:57792"/>
        <dbReference type="ChEBI" id="CHEBI:58262"/>
        <dbReference type="ChEBI" id="CHEBI:58349"/>
        <dbReference type="EC" id="1.1.1.267"/>
    </reaction>
    <physiologicalReaction direction="right-to-left" evidence="1">
        <dbReference type="Rhea" id="RHEA:13719"/>
    </physiologicalReaction>
</comment>
<comment type="cofactor">
    <cofactor evidence="1">
        <name>Mg(2+)</name>
        <dbReference type="ChEBI" id="CHEBI:18420"/>
    </cofactor>
    <cofactor evidence="1">
        <name>Mn(2+)</name>
        <dbReference type="ChEBI" id="CHEBI:29035"/>
    </cofactor>
</comment>
<comment type="pathway">
    <text evidence="1">Isoprenoid biosynthesis; isopentenyl diphosphate biosynthesis via DXP pathway; isopentenyl diphosphate from 1-deoxy-D-xylulose 5-phosphate: step 1/6.</text>
</comment>
<comment type="similarity">
    <text evidence="1">Belongs to the DXR family.</text>
</comment>
<evidence type="ECO:0000255" key="1">
    <source>
        <dbReference type="HAMAP-Rule" id="MF_00183"/>
    </source>
</evidence>
<keyword id="KW-0414">Isoprene biosynthesis</keyword>
<keyword id="KW-0464">Manganese</keyword>
<keyword id="KW-0479">Metal-binding</keyword>
<keyword id="KW-0521">NADP</keyword>
<keyword id="KW-0560">Oxidoreductase</keyword>
<gene>
    <name evidence="1" type="primary">dxr</name>
    <name type="ordered locus">XOO1860</name>
</gene>
<proteinExistence type="inferred from homology"/>
<organism>
    <name type="scientific">Xanthomonas oryzae pv. oryzae (strain MAFF 311018)</name>
    <dbReference type="NCBI Taxonomy" id="342109"/>
    <lineage>
        <taxon>Bacteria</taxon>
        <taxon>Pseudomonadati</taxon>
        <taxon>Pseudomonadota</taxon>
        <taxon>Gammaproteobacteria</taxon>
        <taxon>Lysobacterales</taxon>
        <taxon>Lysobacteraceae</taxon>
        <taxon>Xanthomonas</taxon>
    </lineage>
</organism>
<dbReference type="EC" id="1.1.1.267" evidence="1"/>
<dbReference type="EMBL" id="AP008229">
    <property type="protein sequence ID" value="BAE68615.1"/>
    <property type="molecule type" value="Genomic_DNA"/>
</dbReference>
<dbReference type="RefSeq" id="WP_011258694.1">
    <property type="nucleotide sequence ID" value="NC_007705.1"/>
</dbReference>
<dbReference type="SMR" id="Q2P4B2"/>
<dbReference type="KEGG" id="xom:XOO1860"/>
<dbReference type="HOGENOM" id="CLU_035714_4_0_6"/>
<dbReference type="UniPathway" id="UPA00056">
    <property type="reaction ID" value="UER00092"/>
</dbReference>
<dbReference type="GO" id="GO:0030604">
    <property type="term" value="F:1-deoxy-D-xylulose-5-phosphate reductoisomerase activity"/>
    <property type="evidence" value="ECO:0007669"/>
    <property type="project" value="UniProtKB-UniRule"/>
</dbReference>
<dbReference type="GO" id="GO:0030145">
    <property type="term" value="F:manganese ion binding"/>
    <property type="evidence" value="ECO:0007669"/>
    <property type="project" value="TreeGrafter"/>
</dbReference>
<dbReference type="GO" id="GO:0070402">
    <property type="term" value="F:NADPH binding"/>
    <property type="evidence" value="ECO:0007669"/>
    <property type="project" value="InterPro"/>
</dbReference>
<dbReference type="GO" id="GO:0051484">
    <property type="term" value="P:isopentenyl diphosphate biosynthetic process, methylerythritol 4-phosphate pathway involved in terpenoid biosynthetic process"/>
    <property type="evidence" value="ECO:0007669"/>
    <property type="project" value="TreeGrafter"/>
</dbReference>
<dbReference type="FunFam" id="3.40.50.720:FF:000045">
    <property type="entry name" value="1-deoxy-D-xylulose 5-phosphate reductoisomerase"/>
    <property type="match status" value="1"/>
</dbReference>
<dbReference type="Gene3D" id="1.10.1740.10">
    <property type="match status" value="1"/>
</dbReference>
<dbReference type="Gene3D" id="3.40.50.720">
    <property type="entry name" value="NAD(P)-binding Rossmann-like Domain"/>
    <property type="match status" value="1"/>
</dbReference>
<dbReference type="HAMAP" id="MF_00183">
    <property type="entry name" value="DXP_reductoisom"/>
    <property type="match status" value="1"/>
</dbReference>
<dbReference type="InterPro" id="IPR003821">
    <property type="entry name" value="DXP_reductoisomerase"/>
</dbReference>
<dbReference type="InterPro" id="IPR013644">
    <property type="entry name" value="DXP_reductoisomerase_C"/>
</dbReference>
<dbReference type="InterPro" id="IPR013512">
    <property type="entry name" value="DXP_reductoisomerase_N"/>
</dbReference>
<dbReference type="InterPro" id="IPR026877">
    <property type="entry name" value="DXPR_C"/>
</dbReference>
<dbReference type="InterPro" id="IPR036169">
    <property type="entry name" value="DXPR_C_sf"/>
</dbReference>
<dbReference type="InterPro" id="IPR036291">
    <property type="entry name" value="NAD(P)-bd_dom_sf"/>
</dbReference>
<dbReference type="NCBIfam" id="TIGR00243">
    <property type="entry name" value="Dxr"/>
    <property type="match status" value="1"/>
</dbReference>
<dbReference type="NCBIfam" id="NF009114">
    <property type="entry name" value="PRK12464.1"/>
    <property type="match status" value="1"/>
</dbReference>
<dbReference type="PANTHER" id="PTHR30525">
    <property type="entry name" value="1-DEOXY-D-XYLULOSE 5-PHOSPHATE REDUCTOISOMERASE"/>
    <property type="match status" value="1"/>
</dbReference>
<dbReference type="PANTHER" id="PTHR30525:SF0">
    <property type="entry name" value="1-DEOXY-D-XYLULOSE 5-PHOSPHATE REDUCTOISOMERASE, CHLOROPLASTIC"/>
    <property type="match status" value="1"/>
</dbReference>
<dbReference type="Pfam" id="PF08436">
    <property type="entry name" value="DXP_redisom_C"/>
    <property type="match status" value="1"/>
</dbReference>
<dbReference type="Pfam" id="PF02670">
    <property type="entry name" value="DXP_reductoisom"/>
    <property type="match status" value="1"/>
</dbReference>
<dbReference type="Pfam" id="PF13288">
    <property type="entry name" value="DXPR_C"/>
    <property type="match status" value="1"/>
</dbReference>
<dbReference type="PIRSF" id="PIRSF006205">
    <property type="entry name" value="Dxp_reductismrs"/>
    <property type="match status" value="1"/>
</dbReference>
<dbReference type="SUPFAM" id="SSF69055">
    <property type="entry name" value="1-deoxy-D-xylulose-5-phosphate reductoisomerase, C-terminal domain"/>
    <property type="match status" value="1"/>
</dbReference>
<dbReference type="SUPFAM" id="SSF55347">
    <property type="entry name" value="Glyceraldehyde-3-phosphate dehydrogenase-like, C-terminal domain"/>
    <property type="match status" value="1"/>
</dbReference>
<dbReference type="SUPFAM" id="SSF51735">
    <property type="entry name" value="NAD(P)-binding Rossmann-fold domains"/>
    <property type="match status" value="1"/>
</dbReference>
<accession>Q2P4B2</accession>
<reference key="1">
    <citation type="journal article" date="2005" name="Jpn. Agric. Res. Q.">
        <title>Genome sequence of Xanthomonas oryzae pv. oryzae suggests contribution of large numbers of effector genes and insertion sequences to its race diversity.</title>
        <authorList>
            <person name="Ochiai H."/>
            <person name="Inoue Y."/>
            <person name="Takeya M."/>
            <person name="Sasaki A."/>
            <person name="Kaku H."/>
        </authorList>
    </citation>
    <scope>NUCLEOTIDE SEQUENCE [LARGE SCALE GENOMIC DNA]</scope>
    <source>
        <strain>MAFF 311018</strain>
    </source>
</reference>
<feature type="chain" id="PRO_1000020324" description="1-deoxy-D-xylulose 5-phosphate reductoisomerase">
    <location>
        <begin position="1"/>
        <end position="396"/>
    </location>
</feature>
<feature type="binding site" evidence="1">
    <location>
        <position position="15"/>
    </location>
    <ligand>
        <name>NADPH</name>
        <dbReference type="ChEBI" id="CHEBI:57783"/>
    </ligand>
</feature>
<feature type="binding site" evidence="1">
    <location>
        <position position="16"/>
    </location>
    <ligand>
        <name>NADPH</name>
        <dbReference type="ChEBI" id="CHEBI:57783"/>
    </ligand>
</feature>
<feature type="binding site" evidence="1">
    <location>
        <position position="17"/>
    </location>
    <ligand>
        <name>NADPH</name>
        <dbReference type="ChEBI" id="CHEBI:57783"/>
    </ligand>
</feature>
<feature type="binding site" evidence="1">
    <location>
        <position position="18"/>
    </location>
    <ligand>
        <name>NADPH</name>
        <dbReference type="ChEBI" id="CHEBI:57783"/>
    </ligand>
</feature>
<feature type="binding site" evidence="1">
    <location>
        <position position="41"/>
    </location>
    <ligand>
        <name>NADPH</name>
        <dbReference type="ChEBI" id="CHEBI:57783"/>
    </ligand>
</feature>
<feature type="binding site" evidence="1">
    <location>
        <position position="129"/>
    </location>
    <ligand>
        <name>NADPH</name>
        <dbReference type="ChEBI" id="CHEBI:57783"/>
    </ligand>
</feature>
<feature type="binding site" evidence="1">
    <location>
        <position position="130"/>
    </location>
    <ligand>
        <name>1-deoxy-D-xylulose 5-phosphate</name>
        <dbReference type="ChEBI" id="CHEBI:57792"/>
    </ligand>
</feature>
<feature type="binding site" evidence="1">
    <location>
        <position position="131"/>
    </location>
    <ligand>
        <name>NADPH</name>
        <dbReference type="ChEBI" id="CHEBI:57783"/>
    </ligand>
</feature>
<feature type="binding site" evidence="1">
    <location>
        <position position="155"/>
    </location>
    <ligand>
        <name>Mn(2+)</name>
        <dbReference type="ChEBI" id="CHEBI:29035"/>
    </ligand>
</feature>
<feature type="binding site" evidence="1">
    <location>
        <position position="156"/>
    </location>
    <ligand>
        <name>1-deoxy-D-xylulose 5-phosphate</name>
        <dbReference type="ChEBI" id="CHEBI:57792"/>
    </ligand>
</feature>
<feature type="binding site" evidence="1">
    <location>
        <position position="157"/>
    </location>
    <ligand>
        <name>1-deoxy-D-xylulose 5-phosphate</name>
        <dbReference type="ChEBI" id="CHEBI:57792"/>
    </ligand>
</feature>
<feature type="binding site" evidence="1">
    <location>
        <position position="157"/>
    </location>
    <ligand>
        <name>Mn(2+)</name>
        <dbReference type="ChEBI" id="CHEBI:29035"/>
    </ligand>
</feature>
<feature type="binding site" evidence="1">
    <location>
        <position position="182"/>
    </location>
    <ligand>
        <name>1-deoxy-D-xylulose 5-phosphate</name>
        <dbReference type="ChEBI" id="CHEBI:57792"/>
    </ligand>
</feature>
<feature type="binding site" evidence="1">
    <location>
        <position position="205"/>
    </location>
    <ligand>
        <name>1-deoxy-D-xylulose 5-phosphate</name>
        <dbReference type="ChEBI" id="CHEBI:57792"/>
    </ligand>
</feature>
<feature type="binding site" evidence="1">
    <location>
        <position position="211"/>
    </location>
    <ligand>
        <name>NADPH</name>
        <dbReference type="ChEBI" id="CHEBI:57783"/>
    </ligand>
</feature>
<feature type="binding site" evidence="1">
    <location>
        <position position="218"/>
    </location>
    <ligand>
        <name>1-deoxy-D-xylulose 5-phosphate</name>
        <dbReference type="ChEBI" id="CHEBI:57792"/>
    </ligand>
</feature>
<feature type="binding site" evidence="1">
    <location>
        <position position="223"/>
    </location>
    <ligand>
        <name>1-deoxy-D-xylulose 5-phosphate</name>
        <dbReference type="ChEBI" id="CHEBI:57792"/>
    </ligand>
</feature>
<feature type="binding site" evidence="1">
    <location>
        <position position="224"/>
    </location>
    <ligand>
        <name>1-deoxy-D-xylulose 5-phosphate</name>
        <dbReference type="ChEBI" id="CHEBI:57792"/>
    </ligand>
</feature>
<feature type="binding site" evidence="1">
    <location>
        <position position="227"/>
    </location>
    <ligand>
        <name>1-deoxy-D-xylulose 5-phosphate</name>
        <dbReference type="ChEBI" id="CHEBI:57792"/>
    </ligand>
</feature>
<feature type="binding site" evidence="1">
    <location>
        <position position="227"/>
    </location>
    <ligand>
        <name>Mn(2+)</name>
        <dbReference type="ChEBI" id="CHEBI:29035"/>
    </ligand>
</feature>